<organism>
    <name type="scientific">Fusobacterium nucleatum subsp. nucleatum (strain ATCC 25586 / DSM 15643 / BCRC 10681 / CIP 101130 / JCM 8532 / KCTC 2640 / LMG 13131 / VPI 4355)</name>
    <dbReference type="NCBI Taxonomy" id="190304"/>
    <lineage>
        <taxon>Bacteria</taxon>
        <taxon>Fusobacteriati</taxon>
        <taxon>Fusobacteriota</taxon>
        <taxon>Fusobacteriia</taxon>
        <taxon>Fusobacteriales</taxon>
        <taxon>Fusobacteriaceae</taxon>
        <taxon>Fusobacterium</taxon>
    </lineage>
</organism>
<protein>
    <recommendedName>
        <fullName evidence="1">Small ribosomal subunit protein bS16</fullName>
    </recommendedName>
    <alternativeName>
        <fullName evidence="2">30S ribosomal protein S16</fullName>
    </alternativeName>
</protein>
<proteinExistence type="inferred from homology"/>
<name>RS16_FUSNN</name>
<sequence>MLKLRLTRLGDKKRPSYRIVAMEALSKRDGGAIAYLGNYFPLEDSKVVLKEEEILNYLKNGAQPTRTVKSILVKAGLWAKFEESKKK</sequence>
<evidence type="ECO:0000255" key="1">
    <source>
        <dbReference type="HAMAP-Rule" id="MF_00385"/>
    </source>
</evidence>
<evidence type="ECO:0000305" key="2"/>
<reference key="1">
    <citation type="journal article" date="2002" name="J. Bacteriol.">
        <title>Genome sequence and analysis of the oral bacterium Fusobacterium nucleatum strain ATCC 25586.</title>
        <authorList>
            <person name="Kapatral V."/>
            <person name="Anderson I."/>
            <person name="Ivanova N."/>
            <person name="Reznik G."/>
            <person name="Los T."/>
            <person name="Lykidis A."/>
            <person name="Bhattacharyya A."/>
            <person name="Bartman A."/>
            <person name="Gardner W."/>
            <person name="Grechkin G."/>
            <person name="Zhu L."/>
            <person name="Vasieva O."/>
            <person name="Chu L."/>
            <person name="Kogan Y."/>
            <person name="Chaga O."/>
            <person name="Goltsman E."/>
            <person name="Bernal A."/>
            <person name="Larsen N."/>
            <person name="D'Souza M."/>
            <person name="Walunas T."/>
            <person name="Pusch G."/>
            <person name="Haselkorn R."/>
            <person name="Fonstein M."/>
            <person name="Kyrpides N.C."/>
            <person name="Overbeek R."/>
        </authorList>
    </citation>
    <scope>NUCLEOTIDE SEQUENCE [LARGE SCALE GENOMIC DNA]</scope>
    <source>
        <strain>ATCC 25586 / DSM 15643 / BCRC 10681 / CIP 101130 / JCM 8532 / KCTC 2640 / LMG 13131 / VPI 4355</strain>
    </source>
</reference>
<keyword id="KW-1185">Reference proteome</keyword>
<keyword id="KW-0687">Ribonucleoprotein</keyword>
<keyword id="KW-0689">Ribosomal protein</keyword>
<comment type="similarity">
    <text evidence="1">Belongs to the bacterial ribosomal protein bS16 family.</text>
</comment>
<accession>Q8RDV8</accession>
<dbReference type="EMBL" id="AE009951">
    <property type="protein sequence ID" value="AAL95585.1"/>
    <property type="molecule type" value="Genomic_DNA"/>
</dbReference>
<dbReference type="RefSeq" id="NP_604286.1">
    <property type="nucleotide sequence ID" value="NC_003454.1"/>
</dbReference>
<dbReference type="RefSeq" id="WP_005903282.1">
    <property type="nucleotide sequence ID" value="NZ_OZ209243.1"/>
</dbReference>
<dbReference type="SMR" id="Q8RDV8"/>
<dbReference type="FunCoup" id="Q8RDV8">
    <property type="interactions" value="386"/>
</dbReference>
<dbReference type="STRING" id="190304.FN1392"/>
<dbReference type="PaxDb" id="190304-FN1392"/>
<dbReference type="EnsemblBacteria" id="AAL95585">
    <property type="protein sequence ID" value="AAL95585"/>
    <property type="gene ID" value="FN1392"/>
</dbReference>
<dbReference type="GeneID" id="79784364"/>
<dbReference type="KEGG" id="fnu:FN1392"/>
<dbReference type="PATRIC" id="fig|190304.8.peg.1954"/>
<dbReference type="eggNOG" id="COG0228">
    <property type="taxonomic scope" value="Bacteria"/>
</dbReference>
<dbReference type="HOGENOM" id="CLU_100590_5_2_0"/>
<dbReference type="InParanoid" id="Q8RDV8"/>
<dbReference type="BioCyc" id="FNUC190304:G1FZS-1964-MONOMER"/>
<dbReference type="Proteomes" id="UP000002521">
    <property type="component" value="Chromosome"/>
</dbReference>
<dbReference type="GO" id="GO:0005737">
    <property type="term" value="C:cytoplasm"/>
    <property type="evidence" value="ECO:0007669"/>
    <property type="project" value="UniProtKB-ARBA"/>
</dbReference>
<dbReference type="GO" id="GO:0015935">
    <property type="term" value="C:small ribosomal subunit"/>
    <property type="evidence" value="ECO:0000318"/>
    <property type="project" value="GO_Central"/>
</dbReference>
<dbReference type="GO" id="GO:0003735">
    <property type="term" value="F:structural constituent of ribosome"/>
    <property type="evidence" value="ECO:0000318"/>
    <property type="project" value="GO_Central"/>
</dbReference>
<dbReference type="GO" id="GO:0006412">
    <property type="term" value="P:translation"/>
    <property type="evidence" value="ECO:0007669"/>
    <property type="project" value="UniProtKB-UniRule"/>
</dbReference>
<dbReference type="FunFam" id="3.30.1320.10:FF:000010">
    <property type="entry name" value="30S ribosomal protein S16"/>
    <property type="match status" value="1"/>
</dbReference>
<dbReference type="Gene3D" id="3.30.1320.10">
    <property type="match status" value="1"/>
</dbReference>
<dbReference type="HAMAP" id="MF_00385">
    <property type="entry name" value="Ribosomal_bS16"/>
    <property type="match status" value="1"/>
</dbReference>
<dbReference type="InterPro" id="IPR000307">
    <property type="entry name" value="Ribosomal_bS16"/>
</dbReference>
<dbReference type="InterPro" id="IPR023803">
    <property type="entry name" value="Ribosomal_bS16_dom_sf"/>
</dbReference>
<dbReference type="NCBIfam" id="TIGR00002">
    <property type="entry name" value="S16"/>
    <property type="match status" value="1"/>
</dbReference>
<dbReference type="PANTHER" id="PTHR12919">
    <property type="entry name" value="30S RIBOSOMAL PROTEIN S16"/>
    <property type="match status" value="1"/>
</dbReference>
<dbReference type="PANTHER" id="PTHR12919:SF20">
    <property type="entry name" value="SMALL RIBOSOMAL SUBUNIT PROTEIN BS16M"/>
    <property type="match status" value="1"/>
</dbReference>
<dbReference type="Pfam" id="PF00886">
    <property type="entry name" value="Ribosomal_S16"/>
    <property type="match status" value="1"/>
</dbReference>
<dbReference type="SUPFAM" id="SSF54565">
    <property type="entry name" value="Ribosomal protein S16"/>
    <property type="match status" value="1"/>
</dbReference>
<gene>
    <name evidence="1" type="primary">rpsP</name>
    <name type="ordered locus">FN1392</name>
</gene>
<feature type="chain" id="PRO_0000167188" description="Small ribosomal subunit protein bS16">
    <location>
        <begin position="1"/>
        <end position="87"/>
    </location>
</feature>